<protein>
    <recommendedName>
        <fullName evidence="1">Methylthioribulose-1-phosphate dehydratase</fullName>
        <shortName evidence="1">MTRu-1-P dehydratase</shortName>
        <ecNumber evidence="1">4.2.1.109</ecNumber>
    </recommendedName>
</protein>
<proteinExistence type="inferred from homology"/>
<accession>B9IWQ1</accession>
<organism>
    <name type="scientific">Bacillus cereus (strain Q1)</name>
    <dbReference type="NCBI Taxonomy" id="361100"/>
    <lineage>
        <taxon>Bacteria</taxon>
        <taxon>Bacillati</taxon>
        <taxon>Bacillota</taxon>
        <taxon>Bacilli</taxon>
        <taxon>Bacillales</taxon>
        <taxon>Bacillaceae</taxon>
        <taxon>Bacillus</taxon>
        <taxon>Bacillus cereus group</taxon>
    </lineage>
</organism>
<gene>
    <name evidence="1" type="primary">mtnB</name>
    <name type="ordered locus">BCQ_3828</name>
</gene>
<reference key="1">
    <citation type="journal article" date="2009" name="J. Bacteriol.">
        <title>Complete genome sequence of the extremophilic Bacillus cereus strain Q1 with industrial applications.</title>
        <authorList>
            <person name="Xiong Z."/>
            <person name="Jiang Y."/>
            <person name="Qi D."/>
            <person name="Lu H."/>
            <person name="Yang F."/>
            <person name="Yang J."/>
            <person name="Chen L."/>
            <person name="Sun L."/>
            <person name="Xu X."/>
            <person name="Xue Y."/>
            <person name="Zhu Y."/>
            <person name="Jin Q."/>
        </authorList>
    </citation>
    <scope>NUCLEOTIDE SEQUENCE [LARGE SCALE GENOMIC DNA]</scope>
    <source>
        <strain>Q1</strain>
    </source>
</reference>
<sequence>MKQLFRQWYDLSEIKKELTTRNWFPATSGNISIKVSHEPLTFLITASGKDKTKTTPDDFLLVDHLGVPVLETELRPSAETILHTHIYNNTNAGCVLHVHTTDNNVITNLYSDAVTLQNQEIIKALDIWEEDATIHIPIIENHAHIPTLGENFRKHIQGDSGAVLIRNHGITVWGRDSFDAKKRLEAYEFLFQFHIKLLSIQGGVSNGANSYS</sequence>
<keyword id="KW-0028">Amino-acid biosynthesis</keyword>
<keyword id="KW-0456">Lyase</keyword>
<keyword id="KW-0479">Metal-binding</keyword>
<keyword id="KW-0486">Methionine biosynthesis</keyword>
<keyword id="KW-0862">Zinc</keyword>
<dbReference type="EC" id="4.2.1.109" evidence="1"/>
<dbReference type="EMBL" id="CP000227">
    <property type="protein sequence ID" value="ACM14256.1"/>
    <property type="molecule type" value="Genomic_DNA"/>
</dbReference>
<dbReference type="SMR" id="B9IWQ1"/>
<dbReference type="KEGG" id="bcq:BCQ_3828"/>
<dbReference type="HOGENOM" id="CLU_006033_4_1_9"/>
<dbReference type="UniPathway" id="UPA00904">
    <property type="reaction ID" value="UER00875"/>
</dbReference>
<dbReference type="Proteomes" id="UP000000441">
    <property type="component" value="Chromosome"/>
</dbReference>
<dbReference type="GO" id="GO:0005737">
    <property type="term" value="C:cytoplasm"/>
    <property type="evidence" value="ECO:0007669"/>
    <property type="project" value="InterPro"/>
</dbReference>
<dbReference type="GO" id="GO:0046570">
    <property type="term" value="F:methylthioribulose 1-phosphate dehydratase activity"/>
    <property type="evidence" value="ECO:0007669"/>
    <property type="project" value="UniProtKB-UniRule"/>
</dbReference>
<dbReference type="GO" id="GO:0008270">
    <property type="term" value="F:zinc ion binding"/>
    <property type="evidence" value="ECO:0007669"/>
    <property type="project" value="UniProtKB-UniRule"/>
</dbReference>
<dbReference type="GO" id="GO:0019509">
    <property type="term" value="P:L-methionine salvage from methylthioadenosine"/>
    <property type="evidence" value="ECO:0007669"/>
    <property type="project" value="UniProtKB-UniRule"/>
</dbReference>
<dbReference type="FunFam" id="3.40.225.10:FF:000007">
    <property type="entry name" value="Methylthioribulose-1-phosphate dehydratase"/>
    <property type="match status" value="1"/>
</dbReference>
<dbReference type="Gene3D" id="3.40.225.10">
    <property type="entry name" value="Class II aldolase/adducin N-terminal domain"/>
    <property type="match status" value="1"/>
</dbReference>
<dbReference type="HAMAP" id="MF_01677">
    <property type="entry name" value="Salvage_MtnB"/>
    <property type="match status" value="1"/>
</dbReference>
<dbReference type="InterPro" id="IPR001303">
    <property type="entry name" value="Aldolase_II/adducin_N"/>
</dbReference>
<dbReference type="InterPro" id="IPR036409">
    <property type="entry name" value="Aldolase_II/adducin_N_sf"/>
</dbReference>
<dbReference type="InterPro" id="IPR017714">
    <property type="entry name" value="MethylthioRu-1-P_deHdtase_MtnB"/>
</dbReference>
<dbReference type="NCBIfam" id="NF005244">
    <property type="entry name" value="PRK06754.1"/>
    <property type="match status" value="1"/>
</dbReference>
<dbReference type="NCBIfam" id="TIGR03328">
    <property type="entry name" value="salvage_mtnB"/>
    <property type="match status" value="1"/>
</dbReference>
<dbReference type="PANTHER" id="PTHR10640">
    <property type="entry name" value="METHYLTHIORIBULOSE-1-PHOSPHATE DEHYDRATASE"/>
    <property type="match status" value="1"/>
</dbReference>
<dbReference type="PANTHER" id="PTHR10640:SF7">
    <property type="entry name" value="METHYLTHIORIBULOSE-1-PHOSPHATE DEHYDRATASE"/>
    <property type="match status" value="1"/>
</dbReference>
<dbReference type="Pfam" id="PF00596">
    <property type="entry name" value="Aldolase_II"/>
    <property type="match status" value="1"/>
</dbReference>
<dbReference type="SMART" id="SM01007">
    <property type="entry name" value="Aldolase_II"/>
    <property type="match status" value="1"/>
</dbReference>
<dbReference type="SUPFAM" id="SSF53639">
    <property type="entry name" value="AraD/HMP-PK domain-like"/>
    <property type="match status" value="1"/>
</dbReference>
<name>MTNB_BACCQ</name>
<comment type="function">
    <text evidence="1">Catalyzes the dehydration of methylthioribulose-1-phosphate (MTRu-1-P) into 2,3-diketo-5-methylthiopentyl-1-phosphate (DK-MTP-1-P).</text>
</comment>
<comment type="catalytic activity">
    <reaction evidence="1">
        <text>5-(methylsulfanyl)-D-ribulose 1-phosphate = 5-methylsulfanyl-2,3-dioxopentyl phosphate + H2O</text>
        <dbReference type="Rhea" id="RHEA:15549"/>
        <dbReference type="ChEBI" id="CHEBI:15377"/>
        <dbReference type="ChEBI" id="CHEBI:58548"/>
        <dbReference type="ChEBI" id="CHEBI:58828"/>
        <dbReference type="EC" id="4.2.1.109"/>
    </reaction>
</comment>
<comment type="cofactor">
    <cofactor evidence="1">
        <name>Zn(2+)</name>
        <dbReference type="ChEBI" id="CHEBI:29105"/>
    </cofactor>
    <text evidence="1">Binds 1 zinc ion per subunit.</text>
</comment>
<comment type="pathway">
    <text evidence="1">Amino-acid biosynthesis; L-methionine biosynthesis via salvage pathway; L-methionine from S-methyl-5-thio-alpha-D-ribose 1-phosphate: step 2/6.</text>
</comment>
<comment type="subunit">
    <text evidence="1">Homotetramer.</text>
</comment>
<comment type="similarity">
    <text evidence="1">Belongs to the aldolase class II family. MtnB subfamily.</text>
</comment>
<feature type="chain" id="PRO_1000187346" description="Methylthioribulose-1-phosphate dehydratase">
    <location>
        <begin position="1"/>
        <end position="212"/>
    </location>
</feature>
<feature type="binding site" evidence="1">
    <location>
        <position position="97"/>
    </location>
    <ligand>
        <name>Zn(2+)</name>
        <dbReference type="ChEBI" id="CHEBI:29105"/>
    </ligand>
</feature>
<feature type="binding site" evidence="1">
    <location>
        <position position="99"/>
    </location>
    <ligand>
        <name>Zn(2+)</name>
        <dbReference type="ChEBI" id="CHEBI:29105"/>
    </ligand>
</feature>
<evidence type="ECO:0000255" key="1">
    <source>
        <dbReference type="HAMAP-Rule" id="MF_01677"/>
    </source>
</evidence>